<comment type="function">
    <text evidence="1">Involved in the biosynthesis of the chorismate, which leads to the biosynthesis of aromatic amino acids. Catalyzes the reversible NADPH linked reduction of 3-dehydroshikimate (DHSA) to yield shikimate (SA).</text>
</comment>
<comment type="catalytic activity">
    <reaction evidence="1">
        <text>shikimate + NADP(+) = 3-dehydroshikimate + NADPH + H(+)</text>
        <dbReference type="Rhea" id="RHEA:17737"/>
        <dbReference type="ChEBI" id="CHEBI:15378"/>
        <dbReference type="ChEBI" id="CHEBI:16630"/>
        <dbReference type="ChEBI" id="CHEBI:36208"/>
        <dbReference type="ChEBI" id="CHEBI:57783"/>
        <dbReference type="ChEBI" id="CHEBI:58349"/>
        <dbReference type="EC" id="1.1.1.25"/>
    </reaction>
</comment>
<comment type="pathway">
    <text evidence="1">Metabolic intermediate biosynthesis; chorismate biosynthesis; chorismate from D-erythrose 4-phosphate and phosphoenolpyruvate: step 4/7.</text>
</comment>
<comment type="subunit">
    <text evidence="1">Homodimer.</text>
</comment>
<comment type="similarity">
    <text evidence="1">Belongs to the shikimate dehydrogenase family.</text>
</comment>
<keyword id="KW-0028">Amino-acid biosynthesis</keyword>
<keyword id="KW-0057">Aromatic amino acid biosynthesis</keyword>
<keyword id="KW-0521">NADP</keyword>
<keyword id="KW-0560">Oxidoreductase</keyword>
<keyword id="KW-1185">Reference proteome</keyword>
<dbReference type="EC" id="1.1.1.25" evidence="1"/>
<dbReference type="EMBL" id="CP000746">
    <property type="protein sequence ID" value="ABR73715.1"/>
    <property type="molecule type" value="Genomic_DNA"/>
</dbReference>
<dbReference type="RefSeq" id="WP_011978990.1">
    <property type="nucleotide sequence ID" value="NC_009655.1"/>
</dbReference>
<dbReference type="SMR" id="A6VL68"/>
<dbReference type="STRING" id="339671.Asuc_0337"/>
<dbReference type="KEGG" id="asu:Asuc_0337"/>
<dbReference type="eggNOG" id="COG0169">
    <property type="taxonomic scope" value="Bacteria"/>
</dbReference>
<dbReference type="HOGENOM" id="CLU_044063_2_1_6"/>
<dbReference type="OrthoDB" id="9776868at2"/>
<dbReference type="UniPathway" id="UPA00053">
    <property type="reaction ID" value="UER00087"/>
</dbReference>
<dbReference type="Proteomes" id="UP000001114">
    <property type="component" value="Chromosome"/>
</dbReference>
<dbReference type="GO" id="GO:0005829">
    <property type="term" value="C:cytosol"/>
    <property type="evidence" value="ECO:0007669"/>
    <property type="project" value="TreeGrafter"/>
</dbReference>
<dbReference type="GO" id="GO:0050661">
    <property type="term" value="F:NADP binding"/>
    <property type="evidence" value="ECO:0007669"/>
    <property type="project" value="InterPro"/>
</dbReference>
<dbReference type="GO" id="GO:0004764">
    <property type="term" value="F:shikimate 3-dehydrogenase (NADP+) activity"/>
    <property type="evidence" value="ECO:0007669"/>
    <property type="project" value="UniProtKB-UniRule"/>
</dbReference>
<dbReference type="GO" id="GO:0008652">
    <property type="term" value="P:amino acid biosynthetic process"/>
    <property type="evidence" value="ECO:0007669"/>
    <property type="project" value="UniProtKB-KW"/>
</dbReference>
<dbReference type="GO" id="GO:0009073">
    <property type="term" value="P:aromatic amino acid family biosynthetic process"/>
    <property type="evidence" value="ECO:0007669"/>
    <property type="project" value="UniProtKB-KW"/>
</dbReference>
<dbReference type="GO" id="GO:0009423">
    <property type="term" value="P:chorismate biosynthetic process"/>
    <property type="evidence" value="ECO:0007669"/>
    <property type="project" value="UniProtKB-UniRule"/>
</dbReference>
<dbReference type="GO" id="GO:0019632">
    <property type="term" value="P:shikimate metabolic process"/>
    <property type="evidence" value="ECO:0007669"/>
    <property type="project" value="InterPro"/>
</dbReference>
<dbReference type="CDD" id="cd01065">
    <property type="entry name" value="NAD_bind_Shikimate_DH"/>
    <property type="match status" value="1"/>
</dbReference>
<dbReference type="FunFam" id="3.40.50.10860:FF:000006">
    <property type="entry name" value="Shikimate dehydrogenase (NADP(+))"/>
    <property type="match status" value="1"/>
</dbReference>
<dbReference type="Gene3D" id="3.40.50.10860">
    <property type="entry name" value="Leucine Dehydrogenase, chain A, domain 1"/>
    <property type="match status" value="1"/>
</dbReference>
<dbReference type="Gene3D" id="3.40.50.720">
    <property type="entry name" value="NAD(P)-binding Rossmann-like Domain"/>
    <property type="match status" value="1"/>
</dbReference>
<dbReference type="HAMAP" id="MF_00222">
    <property type="entry name" value="Shikimate_DH_AroE"/>
    <property type="match status" value="1"/>
</dbReference>
<dbReference type="InterPro" id="IPR046346">
    <property type="entry name" value="Aminoacid_DH-like_N_sf"/>
</dbReference>
<dbReference type="InterPro" id="IPR036291">
    <property type="entry name" value="NAD(P)-bd_dom_sf"/>
</dbReference>
<dbReference type="InterPro" id="IPR041121">
    <property type="entry name" value="SDH_C"/>
</dbReference>
<dbReference type="InterPro" id="IPR011342">
    <property type="entry name" value="Shikimate_DH"/>
</dbReference>
<dbReference type="InterPro" id="IPR013708">
    <property type="entry name" value="Shikimate_DH-bd_N"/>
</dbReference>
<dbReference type="InterPro" id="IPR022893">
    <property type="entry name" value="Shikimate_DH_fam"/>
</dbReference>
<dbReference type="InterPro" id="IPR006151">
    <property type="entry name" value="Shikm_DH/Glu-tRNA_Rdtase"/>
</dbReference>
<dbReference type="NCBIfam" id="TIGR00507">
    <property type="entry name" value="aroE"/>
    <property type="match status" value="1"/>
</dbReference>
<dbReference type="NCBIfam" id="NF001310">
    <property type="entry name" value="PRK00258.1-2"/>
    <property type="match status" value="1"/>
</dbReference>
<dbReference type="PANTHER" id="PTHR21089:SF1">
    <property type="entry name" value="BIFUNCTIONAL 3-DEHYDROQUINATE DEHYDRATASE_SHIKIMATE DEHYDROGENASE, CHLOROPLASTIC"/>
    <property type="match status" value="1"/>
</dbReference>
<dbReference type="PANTHER" id="PTHR21089">
    <property type="entry name" value="SHIKIMATE DEHYDROGENASE"/>
    <property type="match status" value="1"/>
</dbReference>
<dbReference type="Pfam" id="PF18317">
    <property type="entry name" value="SDH_C"/>
    <property type="match status" value="1"/>
</dbReference>
<dbReference type="Pfam" id="PF01488">
    <property type="entry name" value="Shikimate_DH"/>
    <property type="match status" value="1"/>
</dbReference>
<dbReference type="Pfam" id="PF08501">
    <property type="entry name" value="Shikimate_dh_N"/>
    <property type="match status" value="1"/>
</dbReference>
<dbReference type="SUPFAM" id="SSF53223">
    <property type="entry name" value="Aminoacid dehydrogenase-like, N-terminal domain"/>
    <property type="match status" value="1"/>
</dbReference>
<dbReference type="SUPFAM" id="SSF51735">
    <property type="entry name" value="NAD(P)-binding Rossmann-fold domains"/>
    <property type="match status" value="1"/>
</dbReference>
<accession>A6VL68</accession>
<name>AROE_ACTSZ</name>
<sequence length="269" mass="29758">MDNYAVWGNPIKQSKSPQIHKIFAEQTKQCMEYKAILGDPEKFETELLRFFADGAKGCNITAPFKERAYSLADEYSERALTAEACNTLKRLQDGRLYADNTDGAGLVSDLERLGWLKSKQSLLIIGAGGATKGVLLPLLQAQQNITLCNRTLTKARDLADKFAPYGNIQAMKLSEIPVQKFDLVINATSLGLQGKTVDIEPEILRLAGAVYDMQYDKGKDTPFVAWAKALGVQNVHDGFGMLVGQAAHSFYLWRGIMPDIKPLLENDLI</sequence>
<reference key="1">
    <citation type="journal article" date="2010" name="BMC Genomics">
        <title>A genomic perspective on the potential of Actinobacillus succinogenes for industrial succinate production.</title>
        <authorList>
            <person name="McKinlay J.B."/>
            <person name="Laivenieks M."/>
            <person name="Schindler B.D."/>
            <person name="McKinlay A.A."/>
            <person name="Siddaramappa S."/>
            <person name="Challacombe J.F."/>
            <person name="Lowry S.R."/>
            <person name="Clum A."/>
            <person name="Lapidus A.L."/>
            <person name="Burkhart K.B."/>
            <person name="Harkins V."/>
            <person name="Vieille C."/>
        </authorList>
    </citation>
    <scope>NUCLEOTIDE SEQUENCE [LARGE SCALE GENOMIC DNA]</scope>
    <source>
        <strain>ATCC 55618 / DSM 22257 / CCUG 43843 / 130Z</strain>
    </source>
</reference>
<feature type="chain" id="PRO_0000325095" description="Shikimate dehydrogenase (NADP(+))">
    <location>
        <begin position="1"/>
        <end position="269"/>
    </location>
</feature>
<feature type="active site" description="Proton acceptor" evidence="1">
    <location>
        <position position="65"/>
    </location>
</feature>
<feature type="binding site" evidence="1">
    <location>
        <begin position="14"/>
        <end position="16"/>
    </location>
    <ligand>
        <name>shikimate</name>
        <dbReference type="ChEBI" id="CHEBI:36208"/>
    </ligand>
</feature>
<feature type="binding site" evidence="1">
    <location>
        <position position="61"/>
    </location>
    <ligand>
        <name>shikimate</name>
        <dbReference type="ChEBI" id="CHEBI:36208"/>
    </ligand>
</feature>
<feature type="binding site" evidence="1">
    <location>
        <position position="77"/>
    </location>
    <ligand>
        <name>NADP(+)</name>
        <dbReference type="ChEBI" id="CHEBI:58349"/>
    </ligand>
</feature>
<feature type="binding site" evidence="1">
    <location>
        <position position="86"/>
    </location>
    <ligand>
        <name>shikimate</name>
        <dbReference type="ChEBI" id="CHEBI:36208"/>
    </ligand>
</feature>
<feature type="binding site" evidence="1">
    <location>
        <position position="102"/>
    </location>
    <ligand>
        <name>shikimate</name>
        <dbReference type="ChEBI" id="CHEBI:36208"/>
    </ligand>
</feature>
<feature type="binding site" evidence="1">
    <location>
        <begin position="126"/>
        <end position="130"/>
    </location>
    <ligand>
        <name>NADP(+)</name>
        <dbReference type="ChEBI" id="CHEBI:58349"/>
    </ligand>
</feature>
<feature type="binding site" evidence="1">
    <location>
        <begin position="149"/>
        <end position="154"/>
    </location>
    <ligand>
        <name>NADP(+)</name>
        <dbReference type="ChEBI" id="CHEBI:58349"/>
    </ligand>
</feature>
<feature type="binding site" evidence="1">
    <location>
        <position position="213"/>
    </location>
    <ligand>
        <name>NADP(+)</name>
        <dbReference type="ChEBI" id="CHEBI:58349"/>
    </ligand>
</feature>
<feature type="binding site" evidence="1">
    <location>
        <position position="215"/>
    </location>
    <ligand>
        <name>shikimate</name>
        <dbReference type="ChEBI" id="CHEBI:36208"/>
    </ligand>
</feature>
<feature type="binding site" evidence="1">
    <location>
        <position position="238"/>
    </location>
    <ligand>
        <name>NADP(+)</name>
        <dbReference type="ChEBI" id="CHEBI:58349"/>
    </ligand>
</feature>
<evidence type="ECO:0000255" key="1">
    <source>
        <dbReference type="HAMAP-Rule" id="MF_00222"/>
    </source>
</evidence>
<protein>
    <recommendedName>
        <fullName evidence="1">Shikimate dehydrogenase (NADP(+))</fullName>
        <shortName evidence="1">SDH</shortName>
        <ecNumber evidence="1">1.1.1.25</ecNumber>
    </recommendedName>
</protein>
<gene>
    <name evidence="1" type="primary">aroE</name>
    <name type="ordered locus">Asuc_0337</name>
</gene>
<proteinExistence type="inferred from homology"/>
<organism>
    <name type="scientific">Actinobacillus succinogenes (strain ATCC 55618 / DSM 22257 / CCUG 43843 / 130Z)</name>
    <dbReference type="NCBI Taxonomy" id="339671"/>
    <lineage>
        <taxon>Bacteria</taxon>
        <taxon>Pseudomonadati</taxon>
        <taxon>Pseudomonadota</taxon>
        <taxon>Gammaproteobacteria</taxon>
        <taxon>Pasteurellales</taxon>
        <taxon>Pasteurellaceae</taxon>
        <taxon>Actinobacillus</taxon>
    </lineage>
</organism>